<keyword id="KW-0418">Kinase</keyword>
<keyword id="KW-0547">Nucleotide-binding</keyword>
<keyword id="KW-0723">Serine/threonine-protein kinase</keyword>
<keyword id="KW-0808">Transferase</keyword>
<protein>
    <recommendedName>
        <fullName evidence="1">Putative pyruvate, phosphate dikinase regulatory protein</fullName>
        <shortName evidence="1">PPDK regulatory protein</shortName>
        <ecNumber evidence="1">2.7.11.32</ecNumber>
        <ecNumber evidence="1">2.7.4.27</ecNumber>
    </recommendedName>
</protein>
<sequence>MKQLNVHLISDYGVDALIAVSRASLERFEHLVSAEHHLWPSTTSIEKLQQVFLHIERSSFVLYSIRERIIRDTLKDFCQKRKIPCIAVLSRVIRELSSYLGIEPIHTSKEEYQTFNEDYFARIDAMNYVLTHDDGQNTWDLDEANIIIVGPSRTSKSPTSVYLSHLGYRVANIPFVNNIPLPAKLTTLENILIVGLTINPDRLIEIRKARLSISQNYDNPVYADREQILEELTNARKTFIKNNWPVIDVTHRSVEEIAAAIMKEYTMRKY</sequence>
<proteinExistence type="inferred from homology"/>
<organism>
    <name type="scientific">Neorickettsia sennetsu (strain ATCC VR-367 / Miyayama)</name>
    <name type="common">Ehrlichia sennetsu</name>
    <dbReference type="NCBI Taxonomy" id="222891"/>
    <lineage>
        <taxon>Bacteria</taxon>
        <taxon>Pseudomonadati</taxon>
        <taxon>Pseudomonadota</taxon>
        <taxon>Alphaproteobacteria</taxon>
        <taxon>Rickettsiales</taxon>
        <taxon>Anaplasmataceae</taxon>
        <taxon>Neorickettsia</taxon>
    </lineage>
</organism>
<name>PDRP_NEOSM</name>
<feature type="chain" id="PRO_0000316704" description="Putative pyruvate, phosphate dikinase regulatory protein">
    <location>
        <begin position="1"/>
        <end position="270"/>
    </location>
</feature>
<feature type="binding site" evidence="1">
    <location>
        <begin position="150"/>
        <end position="157"/>
    </location>
    <ligand>
        <name>ADP</name>
        <dbReference type="ChEBI" id="CHEBI:456216"/>
    </ligand>
</feature>
<comment type="function">
    <text evidence="1">Bifunctional serine/threonine kinase and phosphorylase involved in the regulation of the pyruvate, phosphate dikinase (PPDK) by catalyzing its phosphorylation/dephosphorylation.</text>
</comment>
<comment type="catalytic activity">
    <reaction evidence="1">
        <text>N(tele)-phospho-L-histidyl/L-threonyl-[pyruvate, phosphate dikinase] + ADP = N(tele)-phospho-L-histidyl/O-phospho-L-threonyl-[pyruvate, phosphate dikinase] + AMP + H(+)</text>
        <dbReference type="Rhea" id="RHEA:43692"/>
        <dbReference type="Rhea" id="RHEA-COMP:10650"/>
        <dbReference type="Rhea" id="RHEA-COMP:10651"/>
        <dbReference type="ChEBI" id="CHEBI:15378"/>
        <dbReference type="ChEBI" id="CHEBI:30013"/>
        <dbReference type="ChEBI" id="CHEBI:61977"/>
        <dbReference type="ChEBI" id="CHEBI:83586"/>
        <dbReference type="ChEBI" id="CHEBI:456215"/>
        <dbReference type="ChEBI" id="CHEBI:456216"/>
        <dbReference type="EC" id="2.7.11.32"/>
    </reaction>
</comment>
<comment type="catalytic activity">
    <reaction evidence="1">
        <text>N(tele)-phospho-L-histidyl/O-phospho-L-threonyl-[pyruvate, phosphate dikinase] + phosphate + H(+) = N(tele)-phospho-L-histidyl/L-threonyl-[pyruvate, phosphate dikinase] + diphosphate</text>
        <dbReference type="Rhea" id="RHEA:43696"/>
        <dbReference type="Rhea" id="RHEA-COMP:10650"/>
        <dbReference type="Rhea" id="RHEA-COMP:10651"/>
        <dbReference type="ChEBI" id="CHEBI:15378"/>
        <dbReference type="ChEBI" id="CHEBI:30013"/>
        <dbReference type="ChEBI" id="CHEBI:33019"/>
        <dbReference type="ChEBI" id="CHEBI:43474"/>
        <dbReference type="ChEBI" id="CHEBI:61977"/>
        <dbReference type="ChEBI" id="CHEBI:83586"/>
        <dbReference type="EC" id="2.7.4.27"/>
    </reaction>
</comment>
<comment type="similarity">
    <text evidence="1">Belongs to the pyruvate, phosphate/water dikinase regulatory protein family. PDRP subfamily.</text>
</comment>
<dbReference type="EC" id="2.7.11.32" evidence="1"/>
<dbReference type="EC" id="2.7.4.27" evidence="1"/>
<dbReference type="EMBL" id="CP000237">
    <property type="protein sequence ID" value="ABD45657.1"/>
    <property type="molecule type" value="Genomic_DNA"/>
</dbReference>
<dbReference type="RefSeq" id="WP_011451720.1">
    <property type="nucleotide sequence ID" value="NC_007798.1"/>
</dbReference>
<dbReference type="SMR" id="Q2GE82"/>
<dbReference type="STRING" id="222891.NSE_0324"/>
<dbReference type="KEGG" id="nse:NSE_0324"/>
<dbReference type="eggNOG" id="COG1806">
    <property type="taxonomic scope" value="Bacteria"/>
</dbReference>
<dbReference type="HOGENOM" id="CLU_046206_2_0_5"/>
<dbReference type="OrthoDB" id="9782201at2"/>
<dbReference type="Proteomes" id="UP000001942">
    <property type="component" value="Chromosome"/>
</dbReference>
<dbReference type="GO" id="GO:0043531">
    <property type="term" value="F:ADP binding"/>
    <property type="evidence" value="ECO:0007669"/>
    <property type="project" value="UniProtKB-UniRule"/>
</dbReference>
<dbReference type="GO" id="GO:0005524">
    <property type="term" value="F:ATP binding"/>
    <property type="evidence" value="ECO:0007669"/>
    <property type="project" value="InterPro"/>
</dbReference>
<dbReference type="GO" id="GO:0016776">
    <property type="term" value="F:phosphotransferase activity, phosphate group as acceptor"/>
    <property type="evidence" value="ECO:0007669"/>
    <property type="project" value="UniProtKB-UniRule"/>
</dbReference>
<dbReference type="GO" id="GO:0004674">
    <property type="term" value="F:protein serine/threonine kinase activity"/>
    <property type="evidence" value="ECO:0007669"/>
    <property type="project" value="UniProtKB-UniRule"/>
</dbReference>
<dbReference type="HAMAP" id="MF_00921">
    <property type="entry name" value="PDRP"/>
    <property type="match status" value="1"/>
</dbReference>
<dbReference type="InterPro" id="IPR005177">
    <property type="entry name" value="Kinase-pyrophosphorylase"/>
</dbReference>
<dbReference type="InterPro" id="IPR026565">
    <property type="entry name" value="PPDK_reg"/>
</dbReference>
<dbReference type="NCBIfam" id="NF003742">
    <property type="entry name" value="PRK05339.1"/>
    <property type="match status" value="1"/>
</dbReference>
<dbReference type="PANTHER" id="PTHR31756">
    <property type="entry name" value="PYRUVATE, PHOSPHATE DIKINASE REGULATORY PROTEIN 1, CHLOROPLASTIC"/>
    <property type="match status" value="1"/>
</dbReference>
<dbReference type="PANTHER" id="PTHR31756:SF3">
    <property type="entry name" value="PYRUVATE, PHOSPHATE DIKINASE REGULATORY PROTEIN 1, CHLOROPLASTIC"/>
    <property type="match status" value="1"/>
</dbReference>
<dbReference type="Pfam" id="PF03618">
    <property type="entry name" value="Kinase-PPPase"/>
    <property type="match status" value="1"/>
</dbReference>
<evidence type="ECO:0000255" key="1">
    <source>
        <dbReference type="HAMAP-Rule" id="MF_00921"/>
    </source>
</evidence>
<accession>Q2GE82</accession>
<reference key="1">
    <citation type="journal article" date="2006" name="PLoS Genet.">
        <title>Comparative genomics of emerging human ehrlichiosis agents.</title>
        <authorList>
            <person name="Dunning Hotopp J.C."/>
            <person name="Lin M."/>
            <person name="Madupu R."/>
            <person name="Crabtree J."/>
            <person name="Angiuoli S.V."/>
            <person name="Eisen J.A."/>
            <person name="Seshadri R."/>
            <person name="Ren Q."/>
            <person name="Wu M."/>
            <person name="Utterback T.R."/>
            <person name="Smith S."/>
            <person name="Lewis M."/>
            <person name="Khouri H."/>
            <person name="Zhang C."/>
            <person name="Niu H."/>
            <person name="Lin Q."/>
            <person name="Ohashi N."/>
            <person name="Zhi N."/>
            <person name="Nelson W.C."/>
            <person name="Brinkac L.M."/>
            <person name="Dodson R.J."/>
            <person name="Rosovitz M.J."/>
            <person name="Sundaram J.P."/>
            <person name="Daugherty S.C."/>
            <person name="Davidsen T."/>
            <person name="Durkin A.S."/>
            <person name="Gwinn M.L."/>
            <person name="Haft D.H."/>
            <person name="Selengut J.D."/>
            <person name="Sullivan S.A."/>
            <person name="Zafar N."/>
            <person name="Zhou L."/>
            <person name="Benahmed F."/>
            <person name="Forberger H."/>
            <person name="Halpin R."/>
            <person name="Mulligan S."/>
            <person name="Robinson J."/>
            <person name="White O."/>
            <person name="Rikihisa Y."/>
            <person name="Tettelin H."/>
        </authorList>
    </citation>
    <scope>NUCLEOTIDE SEQUENCE [LARGE SCALE GENOMIC DNA]</scope>
    <source>
        <strain>ATCC VR-367 / Miyayama</strain>
    </source>
</reference>
<gene>
    <name type="ordered locus">NSE_0324</name>
</gene>